<dbReference type="EMBL" id="U30609">
    <property type="protein sequence ID" value="AAA85098.1"/>
    <property type="molecule type" value="mRNA"/>
</dbReference>
<dbReference type="PIR" id="S72554">
    <property type="entry name" value="S72554"/>
</dbReference>
<dbReference type="RefSeq" id="NP_001280032.1">
    <property type="nucleotide sequence ID" value="NM_001293103.1"/>
</dbReference>
<dbReference type="SMR" id="P51050"/>
<dbReference type="FunCoup" id="P51050">
    <property type="interactions" value="118"/>
</dbReference>
<dbReference type="STRING" id="9031.ENSGALP00000027791"/>
<dbReference type="BindingDB" id="P51050"/>
<dbReference type="ChEMBL" id="CHEMBL4466"/>
<dbReference type="DrugCentral" id="P51050"/>
<dbReference type="PaxDb" id="9031-ENSGALP00000027791"/>
<dbReference type="GeneID" id="396338"/>
<dbReference type="KEGG" id="gga:396338"/>
<dbReference type="CTD" id="4544"/>
<dbReference type="VEuPathDB" id="HostDB:geneid_396338"/>
<dbReference type="eggNOG" id="KOG3656">
    <property type="taxonomic scope" value="Eukaryota"/>
</dbReference>
<dbReference type="HOGENOM" id="CLU_009579_3_3_1"/>
<dbReference type="InParanoid" id="P51050"/>
<dbReference type="OrthoDB" id="10044919at2759"/>
<dbReference type="PhylomeDB" id="P51050"/>
<dbReference type="TreeFam" id="TF331693"/>
<dbReference type="Proteomes" id="UP000000539">
    <property type="component" value="Unassembled WGS sequence"/>
</dbReference>
<dbReference type="GO" id="GO:0005886">
    <property type="term" value="C:plasma membrane"/>
    <property type="evidence" value="ECO:0000318"/>
    <property type="project" value="GO_Central"/>
</dbReference>
<dbReference type="GO" id="GO:0004930">
    <property type="term" value="F:G protein-coupled receptor activity"/>
    <property type="evidence" value="ECO:0000318"/>
    <property type="project" value="GO_Central"/>
</dbReference>
<dbReference type="GO" id="GO:0008502">
    <property type="term" value="F:melatonin receptor activity"/>
    <property type="evidence" value="ECO:0007669"/>
    <property type="project" value="InterPro"/>
</dbReference>
<dbReference type="GO" id="GO:0007186">
    <property type="term" value="P:G protein-coupled receptor signaling pathway"/>
    <property type="evidence" value="ECO:0000318"/>
    <property type="project" value="GO_Central"/>
</dbReference>
<dbReference type="FunFam" id="1.20.1070.10:FF:000056">
    <property type="entry name" value="Melatonin receptor type 1A"/>
    <property type="match status" value="1"/>
</dbReference>
<dbReference type="Gene3D" id="1.20.1070.10">
    <property type="entry name" value="Rhodopsin 7-helix transmembrane proteins"/>
    <property type="match status" value="1"/>
</dbReference>
<dbReference type="InterPro" id="IPR000276">
    <property type="entry name" value="GPCR_Rhodpsn"/>
</dbReference>
<dbReference type="InterPro" id="IPR017452">
    <property type="entry name" value="GPCR_Rhodpsn_7TM"/>
</dbReference>
<dbReference type="InterPro" id="IPR002278">
    <property type="entry name" value="Mel_1A/1B_rcpt"/>
</dbReference>
<dbReference type="InterPro" id="IPR000025">
    <property type="entry name" value="Melatonin_rcpt"/>
</dbReference>
<dbReference type="PANTHER" id="PTHR24228">
    <property type="entry name" value="B2 BRADYKININ RECEPTOR/ANGIOTENSIN II RECEPTOR"/>
    <property type="match status" value="1"/>
</dbReference>
<dbReference type="PANTHER" id="PTHR24228:SF54">
    <property type="entry name" value="MELATONIN RECEPTOR TYPE 1B"/>
    <property type="match status" value="1"/>
</dbReference>
<dbReference type="Pfam" id="PF00001">
    <property type="entry name" value="7tm_1"/>
    <property type="match status" value="1"/>
</dbReference>
<dbReference type="PRINTS" id="PR00237">
    <property type="entry name" value="GPCRRHODOPSN"/>
</dbReference>
<dbReference type="PRINTS" id="PR01149">
    <property type="entry name" value="MELATONIN1AR"/>
</dbReference>
<dbReference type="PRINTS" id="PR00857">
    <property type="entry name" value="MELATONINR"/>
</dbReference>
<dbReference type="SUPFAM" id="SSF81321">
    <property type="entry name" value="Family A G protein-coupled receptor-like"/>
    <property type="match status" value="1"/>
</dbReference>
<dbReference type="PROSITE" id="PS00237">
    <property type="entry name" value="G_PROTEIN_RECEP_F1_1"/>
    <property type="match status" value="1"/>
</dbReference>
<dbReference type="PROSITE" id="PS50262">
    <property type="entry name" value="G_PROTEIN_RECEP_F1_2"/>
    <property type="match status" value="1"/>
</dbReference>
<reference key="1">
    <citation type="journal article" date="1995" name="FEBS Lett.">
        <title>Molecular and functional characterization of a partial cDNA encoding a novel chicken brain melatonin receptor.</title>
        <authorList>
            <person name="Liu F."/>
            <person name="Yuan H."/>
            <person name="Sugamori K.S."/>
            <person name="Hamadanizadeh A."/>
            <person name="Lee F.J.S."/>
            <person name="Pang S.F."/>
            <person name="Brown G.M."/>
            <person name="Pristupa Z.B."/>
            <person name="Niznik H.B."/>
        </authorList>
    </citation>
    <scope>NUCLEOTIDE SEQUENCE [MRNA]</scope>
    <source>
        <tissue>Brain</tissue>
    </source>
</reference>
<comment type="function">
    <text evidence="1">High affinity receptor for melatonin. The activity of this receptor is mediated by pertussis toxin sensitive G proteins that inhibits adenylate cyclase activity (By similarity).</text>
</comment>
<comment type="subcellular location">
    <subcellularLocation>
        <location>Cell membrane</location>
        <topology>Multi-pass membrane protein</topology>
    </subcellularLocation>
</comment>
<comment type="tissue specificity">
    <text>Brain and kidney, with trace levels in lungs.</text>
</comment>
<comment type="similarity">
    <text evidence="3">Belongs to the G-protein coupled receptor 1 family.</text>
</comment>
<keyword id="KW-1003">Cell membrane</keyword>
<keyword id="KW-1015">Disulfide bond</keyword>
<keyword id="KW-0297">G-protein coupled receptor</keyword>
<keyword id="KW-0472">Membrane</keyword>
<keyword id="KW-0675">Receptor</keyword>
<keyword id="KW-1185">Reference proteome</keyword>
<keyword id="KW-0807">Transducer</keyword>
<keyword id="KW-0812">Transmembrane</keyword>
<keyword id="KW-1133">Transmembrane helix</keyword>
<protein>
    <recommendedName>
        <fullName>Melatonin receptor type 1B</fullName>
        <shortName>Mel-1B-R</shortName>
        <shortName>Mel1b receptor</shortName>
    </recommendedName>
</protein>
<evidence type="ECO:0000250" key="1"/>
<evidence type="ECO:0000255" key="2"/>
<evidence type="ECO:0000255" key="3">
    <source>
        <dbReference type="PROSITE-ProRule" id="PRU00521"/>
    </source>
</evidence>
<evidence type="ECO:0000256" key="4">
    <source>
        <dbReference type="SAM" id="MobiDB-lite"/>
    </source>
</evidence>
<accession>P51050</accession>
<organism>
    <name type="scientific">Gallus gallus</name>
    <name type="common">Chicken</name>
    <dbReference type="NCBI Taxonomy" id="9031"/>
    <lineage>
        <taxon>Eukaryota</taxon>
        <taxon>Metazoa</taxon>
        <taxon>Chordata</taxon>
        <taxon>Craniata</taxon>
        <taxon>Vertebrata</taxon>
        <taxon>Euteleostomi</taxon>
        <taxon>Archelosauria</taxon>
        <taxon>Archosauria</taxon>
        <taxon>Dinosauria</taxon>
        <taxon>Saurischia</taxon>
        <taxon>Theropoda</taxon>
        <taxon>Coelurosauria</taxon>
        <taxon>Aves</taxon>
        <taxon>Neognathae</taxon>
        <taxon>Galloanserae</taxon>
        <taxon>Galliformes</taxon>
        <taxon>Phasianidae</taxon>
        <taxon>Phasianinae</taxon>
        <taxon>Gallus</taxon>
    </lineage>
</organism>
<proteinExistence type="evidence at transcript level"/>
<name>MTR1B_CHICK</name>
<sequence>GNAFVVSLALADLVVALYPYPLVLLAIFHNGWTLGEMHCKVSGFVMGLSVIGSIFNITAIAINRYCYICHSFAYDKVYSCWNTMLYVSLIWVLTVIATVPNFFVGSLKYDPRIYSCTFVQTASSYYTIAVVVIHFIVPITVVSFCYLRIWVLVLQVRRRVKSETKPRLKPSDFRNFLTMFVVFVIFAFCWAPLNFIGLAVAINPSEMAPKVPEWLFIISYFMAYFNSCLNAIIYGLLNQNFRNEYKRILMSLWMPRLFFQDTSKGGTDGQKSKPSPALNNNDQMKTDTL</sequence>
<feature type="chain" id="PRO_0000069873" description="Melatonin receptor type 1B">
    <location>
        <begin position="1" status="less than"/>
        <end position="289"/>
    </location>
</feature>
<feature type="topological domain" description="Cytoplasmic" evidence="2">
    <location>
        <begin position="1" status="less than"/>
        <end position="2"/>
    </location>
</feature>
<feature type="transmembrane region" description="Helical; Name=2" evidence="2">
    <location>
        <begin position="3"/>
        <end position="23"/>
    </location>
</feature>
<feature type="topological domain" description="Extracellular" evidence="2">
    <location>
        <begin position="24"/>
        <end position="41"/>
    </location>
</feature>
<feature type="transmembrane region" description="Helical; Name=3" evidence="2">
    <location>
        <begin position="42"/>
        <end position="62"/>
    </location>
</feature>
<feature type="topological domain" description="Cytoplasmic" evidence="2">
    <location>
        <begin position="63"/>
        <end position="81"/>
    </location>
</feature>
<feature type="transmembrane region" description="Helical; Name=4" evidence="2">
    <location>
        <begin position="82"/>
        <end position="102"/>
    </location>
</feature>
<feature type="topological domain" description="Extracellular" evidence="2">
    <location>
        <begin position="103"/>
        <end position="126"/>
    </location>
</feature>
<feature type="transmembrane region" description="Helical; Name=5" evidence="2">
    <location>
        <begin position="127"/>
        <end position="147"/>
    </location>
</feature>
<feature type="topological domain" description="Cytoplasmic" evidence="2">
    <location>
        <begin position="148"/>
        <end position="179"/>
    </location>
</feature>
<feature type="transmembrane region" description="Helical; Name=6" evidence="2">
    <location>
        <begin position="180"/>
        <end position="200"/>
    </location>
</feature>
<feature type="topological domain" description="Extracellular" evidence="2">
    <location>
        <begin position="201"/>
        <end position="213"/>
    </location>
</feature>
<feature type="transmembrane region" description="Helical; Name=7" evidence="2">
    <location>
        <begin position="214"/>
        <end position="234"/>
    </location>
</feature>
<feature type="topological domain" description="Cytoplasmic" evidence="2">
    <location>
        <begin position="235"/>
        <end position="289"/>
    </location>
</feature>
<feature type="region of interest" description="Disordered" evidence="4">
    <location>
        <begin position="264"/>
        <end position="289"/>
    </location>
</feature>
<feature type="disulfide bond" evidence="3">
    <location>
        <begin position="39"/>
        <end position="116"/>
    </location>
</feature>
<feature type="non-terminal residue">
    <location>
        <position position="1"/>
    </location>
</feature>